<organism>
    <name type="scientific">Pastinaca sativa</name>
    <name type="common">Wild parsnip</name>
    <name type="synonym">Anethum pastinaca</name>
    <dbReference type="NCBI Taxonomy" id="4041"/>
    <lineage>
        <taxon>Eukaryota</taxon>
        <taxon>Viridiplantae</taxon>
        <taxon>Streptophyta</taxon>
        <taxon>Embryophyta</taxon>
        <taxon>Tracheophyta</taxon>
        <taxon>Spermatophyta</taxon>
        <taxon>Magnoliopsida</taxon>
        <taxon>eudicotyledons</taxon>
        <taxon>Gunneridae</taxon>
        <taxon>Pentapetalae</taxon>
        <taxon>asterids</taxon>
        <taxon>campanulids</taxon>
        <taxon>Apiales</taxon>
        <taxon>Apiaceae</taxon>
        <taxon>Apioideae</taxon>
        <taxon>apioid superclade</taxon>
        <taxon>Tordylieae</taxon>
        <taxon>Tordyliinae</taxon>
        <taxon>Pastinaca</taxon>
    </lineage>
</organism>
<name>C71Z3_PASSA</name>
<gene>
    <name evidence="5" type="primary">CYP71AZ3</name>
</gene>
<protein>
    <recommendedName>
        <fullName evidence="5">6,7,8-trihydroxycoumarin synthase</fullName>
        <ecNumber evidence="4">1.14.14.-</ecNumber>
    </recommendedName>
    <alternativeName>
        <fullName evidence="5">Cytochrome P450 CYP71AZ3</fullName>
    </alternativeName>
</protein>
<reference key="1">
    <citation type="journal article" date="2018" name="Front. Plant Sci.">
        <title>The CYP71AZ P450 subfamily: A driving factor for the diversification of coumarin biosynthesis in apiaceous plants.</title>
        <authorList>
            <person name="Krieger C."/>
            <person name="Roselli S."/>
            <person name="Kellner-Thielmann S."/>
            <person name="Galati G."/>
            <person name="Schneider B."/>
            <person name="Grosjean J."/>
            <person name="Olry A."/>
            <person name="Ritchie D."/>
            <person name="Matern U."/>
            <person name="Bourgaud F."/>
            <person name="Hehn A."/>
        </authorList>
    </citation>
    <scope>NUCLEOTIDE SEQUENCE [MRNA]</scope>
    <scope>FUNCTION</scope>
    <scope>CATALYTIC ACTIVITY</scope>
    <scope>BIOPHYSICOCHEMICAL PROPERTIES</scope>
    <scope>REVIEW</scope>
    <scope>PATHWAY</scope>
    <source>
        <strain>cv. Demi-long de Guernesey</strain>
    </source>
</reference>
<keyword id="KW-0256">Endoplasmic reticulum</keyword>
<keyword id="KW-0349">Heme</keyword>
<keyword id="KW-0408">Iron</keyword>
<keyword id="KW-0472">Membrane</keyword>
<keyword id="KW-0479">Metal-binding</keyword>
<keyword id="KW-0492">Microsome</keyword>
<keyword id="KW-0503">Monooxygenase</keyword>
<keyword id="KW-0560">Oxidoreductase</keyword>
<keyword id="KW-0812">Transmembrane</keyword>
<keyword id="KW-1133">Transmembrane helix</keyword>
<sequence>MEPVFLFLILAFPIASVYLLFYHKKRVVGLSAPPGPPGLPFIGNFHQLYKASSTHEYLWSLSKQYGSLVTLRMGSVPILVVSSPKMAKEVLQTQDLIYCSRPAMTGMQKLSYNGLDVAFSPYTDQWRHTRKFCTLELFTQKRAQLNFRPVREQEVSRMIARLSETAAASKDVNAYEWFSNLATCIISRVAFGKRYDEDGIGKERFQRMLSEIDAMFIGFFVSDFFPMFGWIDKLSGMRDRLDRTFKDLDMFYQELIDEHLKPNRLESPTEDLIDVMLKNEGSSLTKDSMKAILLNVFNGGTGTTATVLAWAMTALLRNQGVMKKAQEEIRSVIGKKGKVDEDDFPSLPYLRAVVKETMRLYPPAPVLVPRETMESSIIGEDKDHMYMVKPKTVVYISMWAIGRDPKTWKNPMEFVPERFLERPDINYKGQQFEYVPFGAGRRICAGINLGVTTVELALANLLYTFDWEPPAGMRFEDIDDETTNGLALQKKNALYIRPKKYMFP</sequence>
<comment type="function">
    <text evidence="4 5">Involved in the biosynthesis of coumarins and furanocoumarins (FCs), natural products required for defense responses against attacks by predators with potential medical and agroindustrial usages such as anticoagulant, rodenticide and artificial vanilla substitutes (PubMed:29971079). Able to catalyze the hydroxylation of esculetin to produce 6,7,8-trihydroxycoumarin (PubMed:29971079).</text>
</comment>
<comment type="cofactor">
    <cofactor evidence="2">
        <name>heme</name>
        <dbReference type="ChEBI" id="CHEBI:30413"/>
    </cofactor>
</comment>
<comment type="biophysicochemical properties">
    <kinetics>
        <KM evidence="4">248.6 uM for esculetin (at pH 7.4 and 28 degrees Celsius)</KM>
    </kinetics>
</comment>
<comment type="pathway">
    <text evidence="4">Secondary metabolite biosynthesis.</text>
</comment>
<comment type="subcellular location">
    <subcellularLocation>
        <location evidence="1">Microsome membrane</location>
        <topology evidence="3">Single-pass membrane protein</topology>
    </subcellularLocation>
</comment>
<comment type="similarity">
    <text evidence="6">Belongs to the cytochrome P450 family.</text>
</comment>
<accession>A0A2Z5D850</accession>
<evidence type="ECO:0000250" key="1">
    <source>
        <dbReference type="UniProtKB" id="Q6QNI4"/>
    </source>
</evidence>
<evidence type="ECO:0000250" key="2">
    <source>
        <dbReference type="UniProtKB" id="Q94IP1"/>
    </source>
</evidence>
<evidence type="ECO:0000255" key="3"/>
<evidence type="ECO:0000269" key="4">
    <source>
    </source>
</evidence>
<evidence type="ECO:0000303" key="5">
    <source>
    </source>
</evidence>
<evidence type="ECO:0000305" key="6"/>
<proteinExistence type="evidence at protein level"/>
<feature type="chain" id="PRO_0000454520" description="6,7,8-trihydroxycoumarin synthase">
    <location>
        <begin position="1"/>
        <end position="504"/>
    </location>
</feature>
<feature type="transmembrane region" description="Helical" evidence="3">
    <location>
        <begin position="1"/>
        <end position="21"/>
    </location>
</feature>
<feature type="region of interest" description="Substrate specificity" evidence="4">
    <location>
        <begin position="363"/>
        <end position="368"/>
    </location>
</feature>
<feature type="binding site" description="axial binding residue" evidence="2">
    <location>
        <position position="444"/>
    </location>
    <ligand>
        <name>heme</name>
        <dbReference type="ChEBI" id="CHEBI:30413"/>
    </ligand>
    <ligandPart>
        <name>Fe</name>
        <dbReference type="ChEBI" id="CHEBI:18248"/>
    </ligandPart>
</feature>
<feature type="site" description="Substrate specificity" evidence="4">
    <location>
        <position position="118"/>
    </location>
</feature>
<feature type="site" description="Substrate specificity" evidence="4">
    <location>
        <position position="299"/>
    </location>
</feature>
<feature type="site" description="Substrate specificity" evidence="4">
    <location>
        <position position="303"/>
    </location>
</feature>
<dbReference type="EC" id="1.14.14.-" evidence="4"/>
<dbReference type="EMBL" id="MH000218">
    <property type="protein sequence ID" value="AXB38860.1"/>
    <property type="molecule type" value="mRNA"/>
</dbReference>
<dbReference type="SMR" id="A0A2Z5D850"/>
<dbReference type="KEGG" id="ag:AXB38860"/>
<dbReference type="GO" id="GO:0005783">
    <property type="term" value="C:endoplasmic reticulum"/>
    <property type="evidence" value="ECO:0007669"/>
    <property type="project" value="UniProtKB-KW"/>
</dbReference>
<dbReference type="GO" id="GO:0016020">
    <property type="term" value="C:membrane"/>
    <property type="evidence" value="ECO:0007669"/>
    <property type="project" value="UniProtKB-KW"/>
</dbReference>
<dbReference type="GO" id="GO:0020037">
    <property type="term" value="F:heme binding"/>
    <property type="evidence" value="ECO:0007669"/>
    <property type="project" value="InterPro"/>
</dbReference>
<dbReference type="GO" id="GO:0005506">
    <property type="term" value="F:iron ion binding"/>
    <property type="evidence" value="ECO:0007669"/>
    <property type="project" value="InterPro"/>
</dbReference>
<dbReference type="GO" id="GO:0004497">
    <property type="term" value="F:monooxygenase activity"/>
    <property type="evidence" value="ECO:0007669"/>
    <property type="project" value="UniProtKB-KW"/>
</dbReference>
<dbReference type="GO" id="GO:0016705">
    <property type="term" value="F:oxidoreductase activity, acting on paired donors, with incorporation or reduction of molecular oxygen"/>
    <property type="evidence" value="ECO:0007669"/>
    <property type="project" value="InterPro"/>
</dbReference>
<dbReference type="GO" id="GO:0009805">
    <property type="term" value="P:coumarin biosynthetic process"/>
    <property type="evidence" value="ECO:0000314"/>
    <property type="project" value="UniProtKB"/>
</dbReference>
<dbReference type="CDD" id="cd11072">
    <property type="entry name" value="CYP71-like"/>
    <property type="match status" value="1"/>
</dbReference>
<dbReference type="FunFam" id="1.10.630.10:FF:000011">
    <property type="entry name" value="Cytochrome P450 83B1"/>
    <property type="match status" value="1"/>
</dbReference>
<dbReference type="Gene3D" id="1.10.630.10">
    <property type="entry name" value="Cytochrome P450"/>
    <property type="match status" value="1"/>
</dbReference>
<dbReference type="InterPro" id="IPR001128">
    <property type="entry name" value="Cyt_P450"/>
</dbReference>
<dbReference type="InterPro" id="IPR017972">
    <property type="entry name" value="Cyt_P450_CS"/>
</dbReference>
<dbReference type="InterPro" id="IPR002401">
    <property type="entry name" value="Cyt_P450_E_grp-I"/>
</dbReference>
<dbReference type="InterPro" id="IPR036396">
    <property type="entry name" value="Cyt_P450_sf"/>
</dbReference>
<dbReference type="PANTHER" id="PTHR47955:SF22">
    <property type="entry name" value="CYTOCHROME P450 83B1-LIKE"/>
    <property type="match status" value="1"/>
</dbReference>
<dbReference type="PANTHER" id="PTHR47955">
    <property type="entry name" value="CYTOCHROME P450 FAMILY 71 PROTEIN"/>
    <property type="match status" value="1"/>
</dbReference>
<dbReference type="Pfam" id="PF00067">
    <property type="entry name" value="p450"/>
    <property type="match status" value="1"/>
</dbReference>
<dbReference type="PRINTS" id="PR00463">
    <property type="entry name" value="EP450I"/>
</dbReference>
<dbReference type="PRINTS" id="PR00385">
    <property type="entry name" value="P450"/>
</dbReference>
<dbReference type="SUPFAM" id="SSF48264">
    <property type="entry name" value="Cytochrome P450"/>
    <property type="match status" value="1"/>
</dbReference>
<dbReference type="PROSITE" id="PS00086">
    <property type="entry name" value="CYTOCHROME_P450"/>
    <property type="match status" value="1"/>
</dbReference>